<evidence type="ECO:0000255" key="1">
    <source>
        <dbReference type="HAMAP-Rule" id="MF_02070"/>
    </source>
</evidence>
<evidence type="ECO:0000305" key="2"/>
<gene>
    <name type="primary">tarA</name>
</gene>
<reference key="1">
    <citation type="journal article" date="2000" name="FEMS Microbiol. Lett.">
        <title>The staphylokinase gene is located in the structural gene encoding N-acetylmuramyl-L-alanine amidase in methicillin-resistant Staphylococcus aureus.</title>
        <authorList>
            <person name="Horii T."/>
            <person name="Yokoyama K."/>
            <person name="Barua S."/>
            <person name="Odagiri T."/>
            <person name="Futamura N."/>
            <person name="Hasegawa T."/>
            <person name="Ohta M."/>
        </authorList>
    </citation>
    <scope>NUCLEOTIDE SEQUENCE [GENOMIC DNA]</scope>
    <source>
        <strain>NU3-1</strain>
    </source>
</reference>
<dbReference type="EC" id="2.4.1.187" evidence="1"/>
<dbReference type="EMBL" id="AB033232">
    <property type="protein sequence ID" value="BAA95012.1"/>
    <property type="status" value="ALT_INIT"/>
    <property type="molecule type" value="Genomic_DNA"/>
</dbReference>
<dbReference type="RefSeq" id="WP_000215388.1">
    <property type="nucleotide sequence ID" value="NZ_WYDB01000004.1"/>
</dbReference>
<dbReference type="SMR" id="Q9LC45"/>
<dbReference type="OMA" id="LYQEPWR"/>
<dbReference type="UniPathway" id="UPA00790"/>
<dbReference type="GO" id="GO:0047244">
    <property type="term" value="F:N-acetylglucosaminyldiphosphoundecaprenol N-acetyl-beta-D-mannosaminyltransferase activity"/>
    <property type="evidence" value="ECO:0007669"/>
    <property type="project" value="UniProtKB-UniRule"/>
</dbReference>
<dbReference type="GO" id="GO:0071555">
    <property type="term" value="P:cell wall organization"/>
    <property type="evidence" value="ECO:0007669"/>
    <property type="project" value="UniProtKB-KW"/>
</dbReference>
<dbReference type="GO" id="GO:0019350">
    <property type="term" value="P:teichoic acid biosynthetic process"/>
    <property type="evidence" value="ECO:0007669"/>
    <property type="project" value="UniProtKB-UniRule"/>
</dbReference>
<dbReference type="CDD" id="cd06533">
    <property type="entry name" value="Glyco_transf_WecG_TagA"/>
    <property type="match status" value="1"/>
</dbReference>
<dbReference type="HAMAP" id="MF_02070">
    <property type="entry name" value="TagA_TarA"/>
    <property type="match status" value="1"/>
</dbReference>
<dbReference type="InterPro" id="IPR053391">
    <property type="entry name" value="TAB_Glycosyltransferase"/>
</dbReference>
<dbReference type="InterPro" id="IPR034714">
    <property type="entry name" value="TagA_TarA"/>
</dbReference>
<dbReference type="InterPro" id="IPR004629">
    <property type="entry name" value="WecG_TagA_CpsF"/>
</dbReference>
<dbReference type="NCBIfam" id="NF041710">
    <property type="entry name" value="UDPacetylman_taseTarA"/>
    <property type="match status" value="1"/>
</dbReference>
<dbReference type="NCBIfam" id="TIGR00696">
    <property type="entry name" value="wecG_tagA_cpsF"/>
    <property type="match status" value="1"/>
</dbReference>
<dbReference type="PANTHER" id="PTHR34136">
    <property type="match status" value="1"/>
</dbReference>
<dbReference type="PANTHER" id="PTHR34136:SF1">
    <property type="entry name" value="UDP-N-ACETYL-D-MANNOSAMINURONIC ACID TRANSFERASE"/>
    <property type="match status" value="1"/>
</dbReference>
<dbReference type="Pfam" id="PF03808">
    <property type="entry name" value="Glyco_tran_WecG"/>
    <property type="match status" value="1"/>
</dbReference>
<sequence length="254" mass="29133">MTVEERSNTAKVDILGVDFDNTTMLQMVENIKTFFANQSTNNLFIVTANPEIVNYATTHQAYLELINQASYIVADGTGVVKASHRLKQPLAHRIPGIELMDECLKIAHVNHQKVFLLGATNEVVEAAQYALQQRYPNISFAHHHGYIDLEDETVVKRIKLFKPDYIFVGMGFPKQEEWIMTHENQFESTVMMGVGGSLEVFAGAKKRAPYIFRKLNIEWIYRALIDWKRIGRLKSIPIFMYKIAKAKRKIKKAK</sequence>
<name>TARA_STAAU</name>
<organism>
    <name type="scientific">Staphylococcus aureus</name>
    <dbReference type="NCBI Taxonomy" id="1280"/>
    <lineage>
        <taxon>Bacteria</taxon>
        <taxon>Bacillati</taxon>
        <taxon>Bacillota</taxon>
        <taxon>Bacilli</taxon>
        <taxon>Bacillales</taxon>
        <taxon>Staphylococcaceae</taxon>
        <taxon>Staphylococcus</taxon>
    </lineage>
</organism>
<accession>Q9LC45</accession>
<protein>
    <recommendedName>
        <fullName evidence="1">N-acetylglucosaminyldiphosphoundecaprenol N-acetyl-beta-D-mannosaminyltransferase</fullName>
        <ecNumber evidence="1">2.4.1.187</ecNumber>
    </recommendedName>
    <alternativeName>
        <fullName evidence="1">N-acetylmannosaminyltransferase</fullName>
    </alternativeName>
    <alternativeName>
        <fullName evidence="1">UDP-N-acetylmannosamine transferase</fullName>
    </alternativeName>
    <alternativeName>
        <fullName evidence="1">UDP-N-acetylmannosamine:N-acetylglucosaminyl pyrophosphorylundecaprenol N-acetylmannosaminyltransferase</fullName>
    </alternativeName>
</protein>
<feature type="chain" id="PRO_0000208440" description="N-acetylglucosaminyldiphosphoundecaprenol N-acetyl-beta-D-mannosaminyltransferase">
    <location>
        <begin position="1"/>
        <end position="254"/>
    </location>
</feature>
<comment type="function">
    <text evidence="1">Catalyzes the conversion of GlcNAc-PP-undecaprenol into ManNAc-GlcNAc-PP-undecaprenol, the first committed lipid intermediate in the de novo synthesis of teichoic acid.</text>
</comment>
<comment type="catalytic activity">
    <reaction evidence="1">
        <text>UDP-N-acetyl-alpha-D-mannosamine + N-acetyl-alpha-D-glucosaminyl-di-trans,octa-cis-undecaprenyl diphosphate = N-acetyl-beta-D-mannosaminyl-(1-&gt;4)-N-acetyl-alpha-D-glucosaminyl di-trans,octa-cis-undecaprenyl diphosphate + UDP + H(+)</text>
        <dbReference type="Rhea" id="RHEA:16053"/>
        <dbReference type="ChEBI" id="CHEBI:15378"/>
        <dbReference type="ChEBI" id="CHEBI:58223"/>
        <dbReference type="ChEBI" id="CHEBI:62959"/>
        <dbReference type="ChEBI" id="CHEBI:68623"/>
        <dbReference type="ChEBI" id="CHEBI:132210"/>
        <dbReference type="EC" id="2.4.1.187"/>
    </reaction>
</comment>
<comment type="pathway">
    <text evidence="2">Cell wall biogenesis; poly(ribitol phosphate) teichoic acid biosynthesis.</text>
</comment>
<comment type="similarity">
    <text evidence="1">Belongs to the glycosyltransferase 26 family. TagA/TarA subfamily.</text>
</comment>
<comment type="sequence caution" evidence="2">
    <conflict type="erroneous initiation">
        <sequence resource="EMBL-CDS" id="BAA95012"/>
    </conflict>
    <text>Truncated N-terminus.</text>
</comment>
<proteinExistence type="inferred from homology"/>
<keyword id="KW-0961">Cell wall biogenesis/degradation</keyword>
<keyword id="KW-0328">Glycosyltransferase</keyword>
<keyword id="KW-0777">Teichoic acid biosynthesis</keyword>
<keyword id="KW-0808">Transferase</keyword>